<comment type="function">
    <text evidence="1">Involved in the biosynthesis of the chorismate, which leads to the biosynthesis of aromatic amino acids. Catalyzes the reversible NADPH linked reduction of 3-dehydroshikimate (DHSA) to yield shikimate (SA).</text>
</comment>
<comment type="catalytic activity">
    <reaction evidence="1">
        <text>shikimate + NADP(+) = 3-dehydroshikimate + NADPH + H(+)</text>
        <dbReference type="Rhea" id="RHEA:17737"/>
        <dbReference type="ChEBI" id="CHEBI:15378"/>
        <dbReference type="ChEBI" id="CHEBI:16630"/>
        <dbReference type="ChEBI" id="CHEBI:36208"/>
        <dbReference type="ChEBI" id="CHEBI:57783"/>
        <dbReference type="ChEBI" id="CHEBI:58349"/>
        <dbReference type="EC" id="1.1.1.25"/>
    </reaction>
</comment>
<comment type="pathway">
    <text evidence="1">Metabolic intermediate biosynthesis; chorismate biosynthesis; chorismate from D-erythrose 4-phosphate and phosphoenolpyruvate: step 4/7.</text>
</comment>
<comment type="subunit">
    <text evidence="1">Homodimer.</text>
</comment>
<comment type="similarity">
    <text evidence="1">Belongs to the shikimate dehydrogenase family.</text>
</comment>
<organism>
    <name type="scientific">Halobacterium salinarum (strain ATCC 29341 / DSM 671 / R1)</name>
    <dbReference type="NCBI Taxonomy" id="478009"/>
    <lineage>
        <taxon>Archaea</taxon>
        <taxon>Methanobacteriati</taxon>
        <taxon>Methanobacteriota</taxon>
        <taxon>Stenosarchaea group</taxon>
        <taxon>Halobacteria</taxon>
        <taxon>Halobacteriales</taxon>
        <taxon>Halobacteriaceae</taxon>
        <taxon>Halobacterium</taxon>
        <taxon>Halobacterium salinarum NRC-34001</taxon>
    </lineage>
</organism>
<keyword id="KW-0028">Amino-acid biosynthesis</keyword>
<keyword id="KW-0057">Aromatic amino acid biosynthesis</keyword>
<keyword id="KW-0521">NADP</keyword>
<keyword id="KW-0560">Oxidoreductase</keyword>
<proteinExistence type="inferred from homology"/>
<name>AROE_HALS3</name>
<protein>
    <recommendedName>
        <fullName evidence="1">Shikimate dehydrogenase (NADP(+))</fullName>
        <shortName evidence="1">SDH</shortName>
        <ecNumber evidence="1">1.1.1.25</ecNumber>
    </recommendedName>
</protein>
<feature type="chain" id="PRO_1000100123" description="Shikimate dehydrogenase (NADP(+))">
    <location>
        <begin position="1"/>
        <end position="266"/>
    </location>
</feature>
<feature type="active site" description="Proton acceptor" evidence="1">
    <location>
        <position position="65"/>
    </location>
</feature>
<feature type="binding site" evidence="1">
    <location>
        <begin position="14"/>
        <end position="16"/>
    </location>
    <ligand>
        <name>shikimate</name>
        <dbReference type="ChEBI" id="CHEBI:36208"/>
    </ligand>
</feature>
<feature type="binding site" evidence="1">
    <location>
        <position position="61"/>
    </location>
    <ligand>
        <name>shikimate</name>
        <dbReference type="ChEBI" id="CHEBI:36208"/>
    </ligand>
</feature>
<feature type="binding site" evidence="1">
    <location>
        <position position="85"/>
    </location>
    <ligand>
        <name>shikimate</name>
        <dbReference type="ChEBI" id="CHEBI:36208"/>
    </ligand>
</feature>
<feature type="binding site" evidence="1">
    <location>
        <position position="100"/>
    </location>
    <ligand>
        <name>shikimate</name>
        <dbReference type="ChEBI" id="CHEBI:36208"/>
    </ligand>
</feature>
<feature type="binding site" evidence="1">
    <location>
        <begin position="124"/>
        <end position="128"/>
    </location>
    <ligand>
        <name>NADP(+)</name>
        <dbReference type="ChEBI" id="CHEBI:58349"/>
    </ligand>
</feature>
<feature type="binding site" evidence="1">
    <location>
        <position position="210"/>
    </location>
    <ligand>
        <name>NADP(+)</name>
        <dbReference type="ChEBI" id="CHEBI:58349"/>
    </ligand>
</feature>
<feature type="binding site" evidence="1">
    <location>
        <position position="212"/>
    </location>
    <ligand>
        <name>shikimate</name>
        <dbReference type="ChEBI" id="CHEBI:36208"/>
    </ligand>
</feature>
<feature type="binding site" evidence="1">
    <location>
        <position position="233"/>
    </location>
    <ligand>
        <name>NADP(+)</name>
        <dbReference type="ChEBI" id="CHEBI:58349"/>
    </ligand>
</feature>
<accession>B0R386</accession>
<reference key="1">
    <citation type="journal article" date="2008" name="Genomics">
        <title>Evolution in the laboratory: the genome of Halobacterium salinarum strain R1 compared to that of strain NRC-1.</title>
        <authorList>
            <person name="Pfeiffer F."/>
            <person name="Schuster S.C."/>
            <person name="Broicher A."/>
            <person name="Falb M."/>
            <person name="Palm P."/>
            <person name="Rodewald K."/>
            <person name="Ruepp A."/>
            <person name="Soppa J."/>
            <person name="Tittor J."/>
            <person name="Oesterhelt D."/>
        </authorList>
    </citation>
    <scope>NUCLEOTIDE SEQUENCE [LARGE SCALE GENOMIC DNA]</scope>
    <source>
        <strain>ATCC 29341 / DSM 671 / R1</strain>
    </source>
</reference>
<sequence length="266" mass="26646">MDVYGLIGNPVGHSLSPPLHAAAYDECGLDARYVTFEPAPDDAAAAIRGAGALGVAGLNVTAPFKQSAASAVATDSMAARVGAVNTIDFSGAAPRGYNTDVAGVKRAFAHHDVSLSGAQAVVVGAGGAGRAAAFALADAGATVRIANRTRAAADELAADVGGTAVGLGDLPRSLADATVLVHATTVGMDDPDTSPVSADALHDDLAVLDAVYSPVETRLLRDAAAAGATTIDGAWMLLYQGAEAFERWTGLDAPVAAMRAALRARL</sequence>
<dbReference type="EC" id="1.1.1.25" evidence="1"/>
<dbReference type="EMBL" id="AM774415">
    <property type="protein sequence ID" value="CAP13198.1"/>
    <property type="molecule type" value="Genomic_DNA"/>
</dbReference>
<dbReference type="RefSeq" id="WP_010902235.1">
    <property type="nucleotide sequence ID" value="NC_010364.1"/>
</dbReference>
<dbReference type="SMR" id="B0R386"/>
<dbReference type="EnsemblBacteria" id="CAP13198">
    <property type="protein sequence ID" value="CAP13198"/>
    <property type="gene ID" value="OE_1565F"/>
</dbReference>
<dbReference type="KEGG" id="hsl:OE_1565F"/>
<dbReference type="HOGENOM" id="CLU_044063_4_3_2"/>
<dbReference type="PhylomeDB" id="B0R386"/>
<dbReference type="UniPathway" id="UPA00053">
    <property type="reaction ID" value="UER00087"/>
</dbReference>
<dbReference type="Proteomes" id="UP000001321">
    <property type="component" value="Chromosome"/>
</dbReference>
<dbReference type="GO" id="GO:0050661">
    <property type="term" value="F:NADP binding"/>
    <property type="evidence" value="ECO:0007669"/>
    <property type="project" value="InterPro"/>
</dbReference>
<dbReference type="GO" id="GO:0004764">
    <property type="term" value="F:shikimate 3-dehydrogenase (NADP+) activity"/>
    <property type="evidence" value="ECO:0007669"/>
    <property type="project" value="UniProtKB-UniRule"/>
</dbReference>
<dbReference type="GO" id="GO:0008652">
    <property type="term" value="P:amino acid biosynthetic process"/>
    <property type="evidence" value="ECO:0007669"/>
    <property type="project" value="UniProtKB-KW"/>
</dbReference>
<dbReference type="GO" id="GO:0009073">
    <property type="term" value="P:aromatic amino acid family biosynthetic process"/>
    <property type="evidence" value="ECO:0007669"/>
    <property type="project" value="UniProtKB-KW"/>
</dbReference>
<dbReference type="GO" id="GO:0009423">
    <property type="term" value="P:chorismate biosynthetic process"/>
    <property type="evidence" value="ECO:0007669"/>
    <property type="project" value="UniProtKB-UniRule"/>
</dbReference>
<dbReference type="GO" id="GO:0019632">
    <property type="term" value="P:shikimate metabolic process"/>
    <property type="evidence" value="ECO:0007669"/>
    <property type="project" value="InterPro"/>
</dbReference>
<dbReference type="CDD" id="cd01065">
    <property type="entry name" value="NAD_bind_Shikimate_DH"/>
    <property type="match status" value="1"/>
</dbReference>
<dbReference type="Gene3D" id="3.40.50.10860">
    <property type="entry name" value="Leucine Dehydrogenase, chain A, domain 1"/>
    <property type="match status" value="1"/>
</dbReference>
<dbReference type="Gene3D" id="3.40.50.720">
    <property type="entry name" value="NAD(P)-binding Rossmann-like Domain"/>
    <property type="match status" value="1"/>
</dbReference>
<dbReference type="HAMAP" id="MF_00222">
    <property type="entry name" value="Shikimate_DH_AroE"/>
    <property type="match status" value="1"/>
</dbReference>
<dbReference type="InterPro" id="IPR046346">
    <property type="entry name" value="Aminoacid_DH-like_N_sf"/>
</dbReference>
<dbReference type="InterPro" id="IPR036291">
    <property type="entry name" value="NAD(P)-bd_dom_sf"/>
</dbReference>
<dbReference type="InterPro" id="IPR041121">
    <property type="entry name" value="SDH_C"/>
</dbReference>
<dbReference type="InterPro" id="IPR011342">
    <property type="entry name" value="Shikimate_DH"/>
</dbReference>
<dbReference type="InterPro" id="IPR013708">
    <property type="entry name" value="Shikimate_DH-bd_N"/>
</dbReference>
<dbReference type="InterPro" id="IPR022893">
    <property type="entry name" value="Shikimate_DH_fam"/>
</dbReference>
<dbReference type="InterPro" id="IPR006151">
    <property type="entry name" value="Shikm_DH/Glu-tRNA_Rdtase"/>
</dbReference>
<dbReference type="NCBIfam" id="TIGR00507">
    <property type="entry name" value="aroE"/>
    <property type="match status" value="1"/>
</dbReference>
<dbReference type="NCBIfam" id="NF001319">
    <property type="entry name" value="PRK00258.3-3"/>
    <property type="match status" value="1"/>
</dbReference>
<dbReference type="PANTHER" id="PTHR21089:SF1">
    <property type="entry name" value="BIFUNCTIONAL 3-DEHYDROQUINATE DEHYDRATASE_SHIKIMATE DEHYDROGENASE, CHLOROPLASTIC"/>
    <property type="match status" value="1"/>
</dbReference>
<dbReference type="PANTHER" id="PTHR21089">
    <property type="entry name" value="SHIKIMATE DEHYDROGENASE"/>
    <property type="match status" value="1"/>
</dbReference>
<dbReference type="Pfam" id="PF18317">
    <property type="entry name" value="SDH_C"/>
    <property type="match status" value="1"/>
</dbReference>
<dbReference type="Pfam" id="PF01488">
    <property type="entry name" value="Shikimate_DH"/>
    <property type="match status" value="1"/>
</dbReference>
<dbReference type="Pfam" id="PF08501">
    <property type="entry name" value="Shikimate_dh_N"/>
    <property type="match status" value="1"/>
</dbReference>
<dbReference type="PRINTS" id="PR00411">
    <property type="entry name" value="PNDRDTASEI"/>
</dbReference>
<dbReference type="SUPFAM" id="SSF53223">
    <property type="entry name" value="Aminoacid dehydrogenase-like, N-terminal domain"/>
    <property type="match status" value="1"/>
</dbReference>
<dbReference type="SUPFAM" id="SSF51735">
    <property type="entry name" value="NAD(P)-binding Rossmann-fold domains"/>
    <property type="match status" value="1"/>
</dbReference>
<evidence type="ECO:0000255" key="1">
    <source>
        <dbReference type="HAMAP-Rule" id="MF_00222"/>
    </source>
</evidence>
<gene>
    <name evidence="1" type="primary">aroE</name>
    <name type="ordered locus">OE_1565F</name>
</gene>